<gene>
    <name type="primary">MARCHF5</name>
    <name type="synonym">MARCH5</name>
</gene>
<feature type="chain" id="PRO_0000271768" description="E3 ubiquitin-protein ligase MARCHF5">
    <location>
        <begin position="1"/>
        <end position="278"/>
    </location>
</feature>
<feature type="transmembrane region" description="Helical" evidence="3">
    <location>
        <begin position="99"/>
        <end position="119"/>
    </location>
</feature>
<feature type="transmembrane region" description="Helical" evidence="3">
    <location>
        <begin position="139"/>
        <end position="159"/>
    </location>
</feature>
<feature type="transmembrane region" description="Helical" evidence="3">
    <location>
        <begin position="209"/>
        <end position="229"/>
    </location>
</feature>
<feature type="transmembrane region" description="Helical" evidence="3">
    <location>
        <begin position="238"/>
        <end position="258"/>
    </location>
</feature>
<feature type="zinc finger region" description="RING-CH-type" evidence="4">
    <location>
        <begin position="6"/>
        <end position="75"/>
    </location>
</feature>
<feature type="binding site" evidence="4">
    <location>
        <position position="14"/>
    </location>
    <ligand>
        <name>Zn(2+)</name>
        <dbReference type="ChEBI" id="CHEBI:29105"/>
        <label>1</label>
    </ligand>
</feature>
<feature type="binding site" evidence="4">
    <location>
        <position position="17"/>
    </location>
    <ligand>
        <name>Zn(2+)</name>
        <dbReference type="ChEBI" id="CHEBI:29105"/>
        <label>1</label>
    </ligand>
</feature>
<feature type="binding site" evidence="4">
    <location>
        <position position="33"/>
    </location>
    <ligand>
        <name>Zn(2+)</name>
        <dbReference type="ChEBI" id="CHEBI:29105"/>
        <label>2</label>
    </ligand>
</feature>
<feature type="binding site" evidence="4">
    <location>
        <position position="35"/>
    </location>
    <ligand>
        <name>Zn(2+)</name>
        <dbReference type="ChEBI" id="CHEBI:29105"/>
        <label>2</label>
    </ligand>
</feature>
<feature type="binding site" evidence="4">
    <location>
        <position position="43"/>
    </location>
    <ligand>
        <name>Zn(2+)</name>
        <dbReference type="ChEBI" id="CHEBI:29105"/>
        <label>1</label>
    </ligand>
</feature>
<feature type="binding site" evidence="4">
    <location>
        <position position="46"/>
    </location>
    <ligand>
        <name>Zn(2+)</name>
        <dbReference type="ChEBI" id="CHEBI:29105"/>
        <label>1</label>
    </ligand>
</feature>
<feature type="binding site" evidence="4">
    <location>
        <position position="65"/>
    </location>
    <ligand>
        <name>Zn(2+)</name>
        <dbReference type="ChEBI" id="CHEBI:29105"/>
        <label>2</label>
    </ligand>
</feature>
<feature type="binding site" evidence="4">
    <location>
        <position position="68"/>
    </location>
    <ligand>
        <name>Zn(2+)</name>
        <dbReference type="ChEBI" id="CHEBI:29105"/>
        <label>2</label>
    </ligand>
</feature>
<protein>
    <recommendedName>
        <fullName>E3 ubiquitin-protein ligase MARCHF5</fullName>
        <ecNumber>2.3.2.27</ecNumber>
    </recommendedName>
    <alternativeName>
        <fullName>Membrane-associated RING finger protein 5</fullName>
    </alternativeName>
    <alternativeName>
        <fullName>Membrane-associated RING-CH protein V</fullName>
        <shortName>MARCH-V</shortName>
    </alternativeName>
    <alternativeName>
        <fullName evidence="5">RING-type E3 ubiquitin transferase MARCHF5</fullName>
    </alternativeName>
</protein>
<name>MARH5_CHLAE</name>
<keyword id="KW-0256">Endoplasmic reticulum</keyword>
<keyword id="KW-0472">Membrane</keyword>
<keyword id="KW-0479">Metal-binding</keyword>
<keyword id="KW-0496">Mitochondrion</keyword>
<keyword id="KW-1000">Mitochondrion outer membrane</keyword>
<keyword id="KW-0808">Transferase</keyword>
<keyword id="KW-0812">Transmembrane</keyword>
<keyword id="KW-1133">Transmembrane helix</keyword>
<keyword id="KW-0832">Ubl conjugation</keyword>
<keyword id="KW-0833">Ubl conjugation pathway</keyword>
<keyword id="KW-0862">Zinc</keyword>
<keyword id="KW-0863">Zinc-finger</keyword>
<reference key="1">
    <citation type="journal article" date="2006" name="EMBO Rep.">
        <title>MARCH-V is a novel mitofusin 2- and Drp1-binding protein able to change mitochondrial morphology.</title>
        <authorList>
            <person name="Nakamura N."/>
            <person name="Kimura Y."/>
            <person name="Tokuda M."/>
            <person name="Honda S."/>
            <person name="Hirose S."/>
        </authorList>
    </citation>
    <scope>NUCLEOTIDE SEQUENCE [MRNA]</scope>
</reference>
<proteinExistence type="evidence at transcript level"/>
<sequence>MPDQALQQMLDRSCWVCFATDEDDRTAEWVRPCRCRGSTKWVHQACLQRWVDEKQRGNSTARVACPQCNAEYLIVFPKLGPVVYVLDLADRLISKACPFAAAGIMVGSIYWTAVTYGAVTVMQVVGHKEGLDVMERADPLFLLIGLPTIPVMLILGKMIRWEDYVLRLWRKYSNKLQILNSIFPGIGCPVPRIPAEANPLADHVSATRILCGALVFPTIATIVGKLMFSSVNSNLQRTILGGIAFVAIKGAFKVYFKQQQYLRQAHRKILNYPEQEEA</sequence>
<dbReference type="EC" id="2.3.2.27"/>
<dbReference type="EMBL" id="AB212856">
    <property type="protein sequence ID" value="BAF02286.1"/>
    <property type="molecule type" value="mRNA"/>
</dbReference>
<dbReference type="UniPathway" id="UPA00143"/>
<dbReference type="GO" id="GO:0005783">
    <property type="term" value="C:endoplasmic reticulum"/>
    <property type="evidence" value="ECO:0000250"/>
    <property type="project" value="UniProtKB"/>
</dbReference>
<dbReference type="GO" id="GO:0005789">
    <property type="term" value="C:endoplasmic reticulum membrane"/>
    <property type="evidence" value="ECO:0007669"/>
    <property type="project" value="UniProtKB-SubCell"/>
</dbReference>
<dbReference type="GO" id="GO:0005741">
    <property type="term" value="C:mitochondrial outer membrane"/>
    <property type="evidence" value="ECO:0000250"/>
    <property type="project" value="UniProtKB"/>
</dbReference>
<dbReference type="GO" id="GO:0061630">
    <property type="term" value="F:ubiquitin protein ligase activity"/>
    <property type="evidence" value="ECO:0000250"/>
    <property type="project" value="UniProtKB"/>
</dbReference>
<dbReference type="GO" id="GO:0008270">
    <property type="term" value="F:zinc ion binding"/>
    <property type="evidence" value="ECO:0007669"/>
    <property type="project" value="UniProtKB-KW"/>
</dbReference>
<dbReference type="GO" id="GO:0051865">
    <property type="term" value="P:protein autoubiquitination"/>
    <property type="evidence" value="ECO:0000250"/>
    <property type="project" value="UniProtKB"/>
</dbReference>
<dbReference type="GO" id="GO:0090140">
    <property type="term" value="P:regulation of mitochondrial fission"/>
    <property type="evidence" value="ECO:0000250"/>
    <property type="project" value="UniProtKB"/>
</dbReference>
<dbReference type="CDD" id="cd16701">
    <property type="entry name" value="RING_CH-C4HC3_MARCH5"/>
    <property type="match status" value="1"/>
</dbReference>
<dbReference type="FunFam" id="3.30.40.10:FF:000262">
    <property type="entry name" value="E3 ubiquitin-protein ligase MARCH5"/>
    <property type="match status" value="1"/>
</dbReference>
<dbReference type="Gene3D" id="3.30.40.10">
    <property type="entry name" value="Zinc/RING finger domain, C3HC4 (zinc finger)"/>
    <property type="match status" value="1"/>
</dbReference>
<dbReference type="InterPro" id="IPR011016">
    <property type="entry name" value="Znf_RING-CH"/>
</dbReference>
<dbReference type="InterPro" id="IPR013083">
    <property type="entry name" value="Znf_RING/FYVE/PHD"/>
</dbReference>
<dbReference type="PANTHER" id="PTHR46283">
    <property type="entry name" value="E3 UBIQUITIN-PROTEIN LIGASE MARCH5"/>
    <property type="match status" value="1"/>
</dbReference>
<dbReference type="Pfam" id="PF12906">
    <property type="entry name" value="RINGv"/>
    <property type="match status" value="1"/>
</dbReference>
<dbReference type="SMART" id="SM00744">
    <property type="entry name" value="RINGv"/>
    <property type="match status" value="1"/>
</dbReference>
<dbReference type="SUPFAM" id="SSF57850">
    <property type="entry name" value="RING/U-box"/>
    <property type="match status" value="1"/>
</dbReference>
<dbReference type="PROSITE" id="PS51292">
    <property type="entry name" value="ZF_RING_CH"/>
    <property type="match status" value="1"/>
</dbReference>
<accession>Q0X0A5</accession>
<organism>
    <name type="scientific">Chlorocebus aethiops</name>
    <name type="common">Green monkey</name>
    <name type="synonym">Cercopithecus aethiops</name>
    <dbReference type="NCBI Taxonomy" id="9534"/>
    <lineage>
        <taxon>Eukaryota</taxon>
        <taxon>Metazoa</taxon>
        <taxon>Chordata</taxon>
        <taxon>Craniata</taxon>
        <taxon>Vertebrata</taxon>
        <taxon>Euteleostomi</taxon>
        <taxon>Mammalia</taxon>
        <taxon>Eutheria</taxon>
        <taxon>Euarchontoglires</taxon>
        <taxon>Primates</taxon>
        <taxon>Haplorrhini</taxon>
        <taxon>Catarrhini</taxon>
        <taxon>Cercopithecidae</taxon>
        <taxon>Cercopithecinae</taxon>
        <taxon>Chlorocebus</taxon>
    </lineage>
</organism>
<evidence type="ECO:0000250" key="1">
    <source>
        <dbReference type="UniProtKB" id="Q3KNM2"/>
    </source>
</evidence>
<evidence type="ECO:0000250" key="2">
    <source>
        <dbReference type="UniProtKB" id="Q9NX47"/>
    </source>
</evidence>
<evidence type="ECO:0000255" key="3"/>
<evidence type="ECO:0000255" key="4">
    <source>
        <dbReference type="PROSITE-ProRule" id="PRU00623"/>
    </source>
</evidence>
<evidence type="ECO:0000305" key="5"/>
<comment type="function">
    <text evidence="1 2">Mitochondrial E3 ubiquitin-protein ligase that plays a crucial role in the control of mitochondrial morphology by acting as a positive regulator of mitochondrial fission and as an important regulator of immune response. Plays a crucial role in maintaining mitochondrial homeostasis by regulating the dynamics of mitochondria through the ubiquitination of key proteins involved in fission and fusion such as FIS1, DNM1L and MFN1 (By similarity). Acts as a critical determinant of mitotic apoptosis through both MCL1-dependent and -independent pathways (By similarity). Turns off persistent immune signaling by degrading oligomeric complexes of retinoic acid-inducible gene I/DDX58 and mitochondrial antiviral-signaling protein/MAVS formed upon RNA virus infection. Promotes STING-mediated type-I interferon production via 'Lys-63'-linked ubiquitination of STING1 thereby preserving its activity and preventing the formation of inactive STING1 polymers. Plays also an essential role in the formation of PEX3-containing vesicles in the de novo biogenesis of peroxisomes from mitochondria. Acts as a regulator of NLRP3 inflammasome activation on the mitochondria by mediating the 'Lys-27'-linked polyubiquitination of NLRP3, positively regulating the NLRP3-NEK7 complex formation and NLRP3 oligomerization (By similarity).</text>
</comment>
<comment type="catalytic activity">
    <reaction evidence="2">
        <text>S-ubiquitinyl-[E2 ubiquitin-conjugating enzyme]-L-cysteine + [acceptor protein]-L-lysine = [E2 ubiquitin-conjugating enzyme]-L-cysteine + N(6)-ubiquitinyl-[acceptor protein]-L-lysine.</text>
        <dbReference type="EC" id="2.3.2.27"/>
    </reaction>
</comment>
<comment type="pathway">
    <text>Protein modification; protein ubiquitination.</text>
</comment>
<comment type="subunit">
    <text evidence="2">Monomer and homodimer. Interacts with MFN1, MFN2, DNM1L and FIS1.</text>
</comment>
<comment type="subcellular location">
    <subcellularLocation>
        <location evidence="2">Mitochondrion outer membrane</location>
        <topology evidence="3">Multi-pass membrane protein</topology>
    </subcellularLocation>
    <subcellularLocation>
        <location evidence="2">Endoplasmic reticulum membrane</location>
        <topology evidence="3">Multi-pass membrane protein</topology>
    </subcellularLocation>
</comment>
<comment type="domain">
    <text evidence="4">The RING-CH-type zinc finger domain is required for E3 ligase activity.</text>
</comment>
<comment type="PTM">
    <text>Autoubiquitinated leading to degradation (short half-life).</text>
</comment>